<dbReference type="EMBL" id="CU458896">
    <property type="protein sequence ID" value="CAM61760.1"/>
    <property type="molecule type" value="Genomic_DNA"/>
</dbReference>
<dbReference type="RefSeq" id="WP_005060357.1">
    <property type="nucleotide sequence ID" value="NZ_MLCG01000002.1"/>
</dbReference>
<dbReference type="SMR" id="B1MN48"/>
<dbReference type="GeneID" id="93378626"/>
<dbReference type="KEGG" id="mab:MAB_1675"/>
<dbReference type="Proteomes" id="UP000007137">
    <property type="component" value="Chromosome"/>
</dbReference>
<dbReference type="GO" id="GO:0043590">
    <property type="term" value="C:bacterial nucleoid"/>
    <property type="evidence" value="ECO:0007669"/>
    <property type="project" value="TreeGrafter"/>
</dbReference>
<dbReference type="GO" id="GO:0006310">
    <property type="term" value="P:DNA recombination"/>
    <property type="evidence" value="ECO:0007669"/>
    <property type="project" value="UniProtKB-UniRule"/>
</dbReference>
<dbReference type="GO" id="GO:0006302">
    <property type="term" value="P:double-strand break repair"/>
    <property type="evidence" value="ECO:0007669"/>
    <property type="project" value="TreeGrafter"/>
</dbReference>
<dbReference type="FunFam" id="2.40.50.140:FF:000176">
    <property type="entry name" value="DNA repair protein RecO"/>
    <property type="match status" value="1"/>
</dbReference>
<dbReference type="Gene3D" id="2.40.50.140">
    <property type="entry name" value="Nucleic acid-binding proteins"/>
    <property type="match status" value="1"/>
</dbReference>
<dbReference type="Gene3D" id="1.20.1440.120">
    <property type="entry name" value="Recombination protein O, C-terminal domain"/>
    <property type="match status" value="1"/>
</dbReference>
<dbReference type="HAMAP" id="MF_00201">
    <property type="entry name" value="RecO"/>
    <property type="match status" value="1"/>
</dbReference>
<dbReference type="InterPro" id="IPR037278">
    <property type="entry name" value="ARFGAP/RecO"/>
</dbReference>
<dbReference type="InterPro" id="IPR022572">
    <property type="entry name" value="DNA_rep/recomb_RecO_N"/>
</dbReference>
<dbReference type="InterPro" id="IPR012340">
    <property type="entry name" value="NA-bd_OB-fold"/>
</dbReference>
<dbReference type="InterPro" id="IPR003717">
    <property type="entry name" value="RecO"/>
</dbReference>
<dbReference type="InterPro" id="IPR042242">
    <property type="entry name" value="RecO_C"/>
</dbReference>
<dbReference type="NCBIfam" id="TIGR00613">
    <property type="entry name" value="reco"/>
    <property type="match status" value="1"/>
</dbReference>
<dbReference type="PANTHER" id="PTHR33991">
    <property type="entry name" value="DNA REPAIR PROTEIN RECO"/>
    <property type="match status" value="1"/>
</dbReference>
<dbReference type="PANTHER" id="PTHR33991:SF1">
    <property type="entry name" value="DNA REPAIR PROTEIN RECO"/>
    <property type="match status" value="1"/>
</dbReference>
<dbReference type="Pfam" id="PF02565">
    <property type="entry name" value="RecO_C"/>
    <property type="match status" value="1"/>
</dbReference>
<dbReference type="Pfam" id="PF11967">
    <property type="entry name" value="RecO_N"/>
    <property type="match status" value="1"/>
</dbReference>
<dbReference type="SUPFAM" id="SSF57863">
    <property type="entry name" value="ArfGap/RecO-like zinc finger"/>
    <property type="match status" value="1"/>
</dbReference>
<dbReference type="SUPFAM" id="SSF50249">
    <property type="entry name" value="Nucleic acid-binding proteins"/>
    <property type="match status" value="1"/>
</dbReference>
<protein>
    <recommendedName>
        <fullName evidence="1">DNA repair protein RecO</fullName>
    </recommendedName>
    <alternativeName>
        <fullName evidence="1">Recombination protein O</fullName>
    </alternativeName>
</protein>
<evidence type="ECO:0000255" key="1">
    <source>
        <dbReference type="HAMAP-Rule" id="MF_00201"/>
    </source>
</evidence>
<gene>
    <name evidence="1" type="primary">recO</name>
    <name type="ordered locus">MAB_1675</name>
</gene>
<organism>
    <name type="scientific">Mycobacteroides abscessus (strain ATCC 19977 / DSM 44196 / CCUG 20993 / CIP 104536 / JCM 13569 / NCTC 13031 / TMC 1543 / L948)</name>
    <name type="common">Mycobacterium abscessus</name>
    <dbReference type="NCBI Taxonomy" id="561007"/>
    <lineage>
        <taxon>Bacteria</taxon>
        <taxon>Bacillati</taxon>
        <taxon>Actinomycetota</taxon>
        <taxon>Actinomycetes</taxon>
        <taxon>Mycobacteriales</taxon>
        <taxon>Mycobacteriaceae</taxon>
        <taxon>Mycobacteroides</taxon>
        <taxon>Mycobacteroides abscessus</taxon>
    </lineage>
</organism>
<proteinExistence type="inferred from homology"/>
<sequence length="261" mass="28419">MRLYRDRAVVLRQHKLGEADRIVTLLTRQHGLVRAVAKGVRRTRSKFGSRLEPFAHIDVQLHPGRNLDIVTQVQAIDAFAADIVSDYGRYTTACAILETAERIAGEERAPAVALHRLTVGALRAIADQQRSRELILDAYLLRAMSIAGWAPAIGECARCATPGPHRAFHVAAGGSVCVHCRPAGAVTPPQGVLELMAALHDGDWAATDDVPQTQRTQASGLIAAHLQWHLERKLRTLPLVERGSRLNMSHGEEQPARSAAG</sequence>
<reference key="1">
    <citation type="journal article" date="2009" name="PLoS ONE">
        <title>Non mycobacterial virulence genes in the genome of the emerging pathogen Mycobacterium abscessus.</title>
        <authorList>
            <person name="Ripoll F."/>
            <person name="Pasek S."/>
            <person name="Schenowitz C."/>
            <person name="Dossat C."/>
            <person name="Barbe V."/>
            <person name="Rottman M."/>
            <person name="Macheras E."/>
            <person name="Heym B."/>
            <person name="Herrmann J.L."/>
            <person name="Daffe M."/>
            <person name="Brosch R."/>
            <person name="Risler J.L."/>
            <person name="Gaillard J.L."/>
        </authorList>
    </citation>
    <scope>NUCLEOTIDE SEQUENCE [LARGE SCALE GENOMIC DNA]</scope>
    <source>
        <strain>ATCC 19977 / DSM 44196 / CCUG 20993 / CIP 104536 / JCM 13569 / NCTC 13031 / TMC 1543 / L948</strain>
    </source>
</reference>
<name>RECO_MYCA9</name>
<comment type="function">
    <text evidence="1">Involved in DNA repair and RecF pathway recombination.</text>
</comment>
<comment type="similarity">
    <text evidence="1">Belongs to the RecO family.</text>
</comment>
<feature type="chain" id="PRO_1000099391" description="DNA repair protein RecO">
    <location>
        <begin position="1"/>
        <end position="261"/>
    </location>
</feature>
<accession>B1MN48</accession>
<keyword id="KW-0227">DNA damage</keyword>
<keyword id="KW-0233">DNA recombination</keyword>
<keyword id="KW-0234">DNA repair</keyword>
<keyword id="KW-1185">Reference proteome</keyword>